<accession>B1JPY6</accession>
<evidence type="ECO:0000255" key="1">
    <source>
        <dbReference type="HAMAP-Rule" id="MF_00551"/>
    </source>
</evidence>
<proteinExistence type="inferred from homology"/>
<dbReference type="EC" id="2.7.1.48" evidence="1"/>
<dbReference type="EMBL" id="CP000950">
    <property type="protein sequence ID" value="ACA68829.1"/>
    <property type="molecule type" value="Genomic_DNA"/>
</dbReference>
<dbReference type="RefSeq" id="WP_002211872.1">
    <property type="nucleotide sequence ID" value="NZ_CP009792.1"/>
</dbReference>
<dbReference type="SMR" id="B1JPY6"/>
<dbReference type="GeneID" id="57977044"/>
<dbReference type="KEGG" id="ypy:YPK_2552"/>
<dbReference type="PATRIC" id="fig|502800.11.peg.3248"/>
<dbReference type="UniPathway" id="UPA00574">
    <property type="reaction ID" value="UER00637"/>
</dbReference>
<dbReference type="UniPathway" id="UPA00579">
    <property type="reaction ID" value="UER00640"/>
</dbReference>
<dbReference type="GO" id="GO:0005737">
    <property type="term" value="C:cytoplasm"/>
    <property type="evidence" value="ECO:0007669"/>
    <property type="project" value="UniProtKB-SubCell"/>
</dbReference>
<dbReference type="GO" id="GO:0005524">
    <property type="term" value="F:ATP binding"/>
    <property type="evidence" value="ECO:0007669"/>
    <property type="project" value="UniProtKB-UniRule"/>
</dbReference>
<dbReference type="GO" id="GO:0043771">
    <property type="term" value="F:cytidine kinase activity"/>
    <property type="evidence" value="ECO:0007669"/>
    <property type="project" value="RHEA"/>
</dbReference>
<dbReference type="GO" id="GO:0004849">
    <property type="term" value="F:uridine kinase activity"/>
    <property type="evidence" value="ECO:0007669"/>
    <property type="project" value="UniProtKB-UniRule"/>
</dbReference>
<dbReference type="GO" id="GO:0044211">
    <property type="term" value="P:CTP salvage"/>
    <property type="evidence" value="ECO:0007669"/>
    <property type="project" value="UniProtKB-UniRule"/>
</dbReference>
<dbReference type="GO" id="GO:0044206">
    <property type="term" value="P:UMP salvage"/>
    <property type="evidence" value="ECO:0007669"/>
    <property type="project" value="UniProtKB-UniRule"/>
</dbReference>
<dbReference type="CDD" id="cd02023">
    <property type="entry name" value="UMPK"/>
    <property type="match status" value="1"/>
</dbReference>
<dbReference type="FunFam" id="3.40.50.300:FF:000252">
    <property type="entry name" value="Uridine kinase"/>
    <property type="match status" value="1"/>
</dbReference>
<dbReference type="Gene3D" id="3.40.50.300">
    <property type="entry name" value="P-loop containing nucleotide triphosphate hydrolases"/>
    <property type="match status" value="1"/>
</dbReference>
<dbReference type="HAMAP" id="MF_00551">
    <property type="entry name" value="Uridine_kinase"/>
    <property type="match status" value="1"/>
</dbReference>
<dbReference type="InterPro" id="IPR027417">
    <property type="entry name" value="P-loop_NTPase"/>
</dbReference>
<dbReference type="InterPro" id="IPR006083">
    <property type="entry name" value="PRK/URK"/>
</dbReference>
<dbReference type="InterPro" id="IPR026008">
    <property type="entry name" value="Uridine_kinase"/>
</dbReference>
<dbReference type="InterPro" id="IPR000764">
    <property type="entry name" value="Uridine_kinase-like"/>
</dbReference>
<dbReference type="NCBIfam" id="NF004018">
    <property type="entry name" value="PRK05480.1"/>
    <property type="match status" value="1"/>
</dbReference>
<dbReference type="NCBIfam" id="TIGR00235">
    <property type="entry name" value="udk"/>
    <property type="match status" value="1"/>
</dbReference>
<dbReference type="PANTHER" id="PTHR10285">
    <property type="entry name" value="URIDINE KINASE"/>
    <property type="match status" value="1"/>
</dbReference>
<dbReference type="Pfam" id="PF00485">
    <property type="entry name" value="PRK"/>
    <property type="match status" value="1"/>
</dbReference>
<dbReference type="PRINTS" id="PR00988">
    <property type="entry name" value="URIDINKINASE"/>
</dbReference>
<dbReference type="SUPFAM" id="SSF52540">
    <property type="entry name" value="P-loop containing nucleoside triphosphate hydrolases"/>
    <property type="match status" value="1"/>
</dbReference>
<comment type="catalytic activity">
    <reaction evidence="1">
        <text>uridine + ATP = UMP + ADP + H(+)</text>
        <dbReference type="Rhea" id="RHEA:16825"/>
        <dbReference type="ChEBI" id="CHEBI:15378"/>
        <dbReference type="ChEBI" id="CHEBI:16704"/>
        <dbReference type="ChEBI" id="CHEBI:30616"/>
        <dbReference type="ChEBI" id="CHEBI:57865"/>
        <dbReference type="ChEBI" id="CHEBI:456216"/>
        <dbReference type="EC" id="2.7.1.48"/>
    </reaction>
</comment>
<comment type="catalytic activity">
    <reaction evidence="1">
        <text>cytidine + ATP = CMP + ADP + H(+)</text>
        <dbReference type="Rhea" id="RHEA:24674"/>
        <dbReference type="ChEBI" id="CHEBI:15378"/>
        <dbReference type="ChEBI" id="CHEBI:17562"/>
        <dbReference type="ChEBI" id="CHEBI:30616"/>
        <dbReference type="ChEBI" id="CHEBI:60377"/>
        <dbReference type="ChEBI" id="CHEBI:456216"/>
        <dbReference type="EC" id="2.7.1.48"/>
    </reaction>
</comment>
<comment type="pathway">
    <text evidence="1">Pyrimidine metabolism; CTP biosynthesis via salvage pathway; CTP from cytidine: step 1/3.</text>
</comment>
<comment type="pathway">
    <text evidence="1">Pyrimidine metabolism; UMP biosynthesis via salvage pathway; UMP from uridine: step 1/1.</text>
</comment>
<comment type="subcellular location">
    <subcellularLocation>
        <location evidence="1">Cytoplasm</location>
    </subcellularLocation>
</comment>
<comment type="similarity">
    <text evidence="1">Belongs to the uridine kinase family.</text>
</comment>
<sequence length="213" mass="24453">MTDKAHQCVIIGIAGASASGKSLIASTLYRELREQVGDQHIGVIPEDGYYKDQSHLSMEERVKTNYDHPSAMDHNLLLEHLQALKAGKPVELPLYSYTEHTRKKETVHLEPKKVIILEGILLLTDIRLRQEMNFSIFVDTPLDICLMRRMKRDVNERGRSMDSVMAQYQKTVRPMFLQFIEPSKQYADIIVPRGGKNRIAIDILKAKISQFFE</sequence>
<organism>
    <name type="scientific">Yersinia pseudotuberculosis serotype O:3 (strain YPIII)</name>
    <dbReference type="NCBI Taxonomy" id="502800"/>
    <lineage>
        <taxon>Bacteria</taxon>
        <taxon>Pseudomonadati</taxon>
        <taxon>Pseudomonadota</taxon>
        <taxon>Gammaproteobacteria</taxon>
        <taxon>Enterobacterales</taxon>
        <taxon>Yersiniaceae</taxon>
        <taxon>Yersinia</taxon>
    </lineage>
</organism>
<feature type="chain" id="PRO_1000129099" description="Uridine kinase">
    <location>
        <begin position="1"/>
        <end position="213"/>
    </location>
</feature>
<feature type="binding site" evidence="1">
    <location>
        <begin position="15"/>
        <end position="22"/>
    </location>
    <ligand>
        <name>ATP</name>
        <dbReference type="ChEBI" id="CHEBI:30616"/>
    </ligand>
</feature>
<protein>
    <recommendedName>
        <fullName evidence="1">Uridine kinase</fullName>
        <ecNumber evidence="1">2.7.1.48</ecNumber>
    </recommendedName>
    <alternativeName>
        <fullName evidence="1">Cytidine monophosphokinase</fullName>
    </alternativeName>
    <alternativeName>
        <fullName evidence="1">Uridine monophosphokinase</fullName>
    </alternativeName>
</protein>
<keyword id="KW-0067">ATP-binding</keyword>
<keyword id="KW-0963">Cytoplasm</keyword>
<keyword id="KW-0418">Kinase</keyword>
<keyword id="KW-0547">Nucleotide-binding</keyword>
<keyword id="KW-0808">Transferase</keyword>
<name>URK_YERPY</name>
<reference key="1">
    <citation type="submission" date="2008-02" db="EMBL/GenBank/DDBJ databases">
        <title>Complete sequence of Yersinia pseudotuberculosis YPIII.</title>
        <authorList>
            <consortium name="US DOE Joint Genome Institute"/>
            <person name="Copeland A."/>
            <person name="Lucas S."/>
            <person name="Lapidus A."/>
            <person name="Glavina del Rio T."/>
            <person name="Dalin E."/>
            <person name="Tice H."/>
            <person name="Bruce D."/>
            <person name="Goodwin L."/>
            <person name="Pitluck S."/>
            <person name="Munk A.C."/>
            <person name="Brettin T."/>
            <person name="Detter J.C."/>
            <person name="Han C."/>
            <person name="Tapia R."/>
            <person name="Schmutz J."/>
            <person name="Larimer F."/>
            <person name="Land M."/>
            <person name="Hauser L."/>
            <person name="Challacombe J.F."/>
            <person name="Green L."/>
            <person name="Lindler L.E."/>
            <person name="Nikolich M.P."/>
            <person name="Richardson P."/>
        </authorList>
    </citation>
    <scope>NUCLEOTIDE SEQUENCE [LARGE SCALE GENOMIC DNA]</scope>
    <source>
        <strain>YPIII</strain>
    </source>
</reference>
<gene>
    <name evidence="1" type="primary">udk</name>
    <name type="ordered locus">YPK_2552</name>
</gene>